<organism>
    <name type="scientific">Pyropia yezoensis</name>
    <name type="common">Susabi-nori</name>
    <name type="synonym">Porphyra yezoensis</name>
    <dbReference type="NCBI Taxonomy" id="2788"/>
    <lineage>
        <taxon>Eukaryota</taxon>
        <taxon>Rhodophyta</taxon>
        <taxon>Bangiophyceae</taxon>
        <taxon>Bangiales</taxon>
        <taxon>Bangiaceae</taxon>
        <taxon>Pyropia</taxon>
    </lineage>
</organism>
<feature type="chain" id="PRO_0000277292" description="ATP synthase subunit c, chloroplastic">
    <location>
        <begin position="1"/>
        <end position="82"/>
    </location>
</feature>
<feature type="transmembrane region" description="Helical" evidence="1">
    <location>
        <begin position="7"/>
        <end position="27"/>
    </location>
</feature>
<feature type="transmembrane region" description="Helical" evidence="1">
    <location>
        <begin position="57"/>
        <end position="77"/>
    </location>
</feature>
<feature type="site" description="Reversibly protonated during proton transport" evidence="1">
    <location>
        <position position="61"/>
    </location>
</feature>
<gene>
    <name evidence="1" type="primary">atpH</name>
</gene>
<comment type="function">
    <text evidence="1">F(1)F(0) ATP synthase produces ATP from ADP in the presence of a proton or sodium gradient. F-type ATPases consist of two structural domains, F(1) containing the extramembraneous catalytic core and F(0) containing the membrane proton channel, linked together by a central stalk and a peripheral stalk. During catalysis, ATP synthesis in the catalytic domain of F(1) is coupled via a rotary mechanism of the central stalk subunits to proton translocation.</text>
</comment>
<comment type="function">
    <text evidence="1">Key component of the F(0) channel; it plays a direct role in translocation across the membrane. A homomeric c-ring of between 10-14 subunits forms the central stalk rotor element with the F(1) delta and epsilon subunits.</text>
</comment>
<comment type="subunit">
    <text evidence="1">F-type ATPases have 2 components, F(1) - the catalytic core - and F(0) - the membrane proton channel. F(1) has five subunits: alpha(3), beta(3), gamma(1), delta(1), epsilon(1). F(0) has four main subunits: a(1), b(1), b'(1) and c(10-14). The alpha and beta chains form an alternating ring which encloses part of the gamma chain. F(1) is attached to F(0) by a central stalk formed by the gamma and epsilon chains, while a peripheral stalk is formed by the delta, b and b' chains.</text>
</comment>
<comment type="subcellular location">
    <subcellularLocation>
        <location evidence="1">Plastid</location>
        <location evidence="1">Chloroplast thylakoid membrane</location>
        <topology evidence="1">Multi-pass membrane protein</topology>
    </subcellularLocation>
</comment>
<comment type="miscellaneous">
    <text>In plastids the F-type ATPase is also known as CF(1)CF(0).</text>
</comment>
<comment type="similarity">
    <text evidence="1">Belongs to the ATPase C chain family.</text>
</comment>
<geneLocation type="chloroplast"/>
<keyword id="KW-0066">ATP synthesis</keyword>
<keyword id="KW-0138">CF(0)</keyword>
<keyword id="KW-0150">Chloroplast</keyword>
<keyword id="KW-0375">Hydrogen ion transport</keyword>
<keyword id="KW-0406">Ion transport</keyword>
<keyword id="KW-0446">Lipid-binding</keyword>
<keyword id="KW-0472">Membrane</keyword>
<keyword id="KW-0934">Plastid</keyword>
<keyword id="KW-0793">Thylakoid</keyword>
<keyword id="KW-0812">Transmembrane</keyword>
<keyword id="KW-1133">Transmembrane helix</keyword>
<keyword id="KW-0813">Transport</keyword>
<sequence>MDSIVSAASVIAAGLAVGLAAIGPGIGQGSAAANAVEGIARQPEVEGKIRGTLLLSLAFMESLTIYGLVVALSLLFANPYVG</sequence>
<accession>Q1XDP1</accession>
<dbReference type="EMBL" id="AP006715">
    <property type="protein sequence ID" value="BAE92370.1"/>
    <property type="molecule type" value="Genomic_DNA"/>
</dbReference>
<dbReference type="RefSeq" id="YP_536927.1">
    <property type="nucleotide sequence ID" value="NC_007932.1"/>
</dbReference>
<dbReference type="SMR" id="Q1XDP1"/>
<dbReference type="GeneID" id="3978839"/>
<dbReference type="GO" id="GO:0009535">
    <property type="term" value="C:chloroplast thylakoid membrane"/>
    <property type="evidence" value="ECO:0007669"/>
    <property type="project" value="UniProtKB-SubCell"/>
</dbReference>
<dbReference type="GO" id="GO:0045259">
    <property type="term" value="C:proton-transporting ATP synthase complex"/>
    <property type="evidence" value="ECO:0007669"/>
    <property type="project" value="UniProtKB-KW"/>
</dbReference>
<dbReference type="GO" id="GO:0033177">
    <property type="term" value="C:proton-transporting two-sector ATPase complex, proton-transporting domain"/>
    <property type="evidence" value="ECO:0007669"/>
    <property type="project" value="InterPro"/>
</dbReference>
<dbReference type="GO" id="GO:0008289">
    <property type="term" value="F:lipid binding"/>
    <property type="evidence" value="ECO:0007669"/>
    <property type="project" value="UniProtKB-KW"/>
</dbReference>
<dbReference type="GO" id="GO:0046933">
    <property type="term" value="F:proton-transporting ATP synthase activity, rotational mechanism"/>
    <property type="evidence" value="ECO:0007669"/>
    <property type="project" value="UniProtKB-UniRule"/>
</dbReference>
<dbReference type="CDD" id="cd18183">
    <property type="entry name" value="ATP-synt_Fo_c_ATPH"/>
    <property type="match status" value="1"/>
</dbReference>
<dbReference type="FunFam" id="1.20.20.10:FF:000001">
    <property type="entry name" value="ATP synthase subunit c, chloroplastic"/>
    <property type="match status" value="1"/>
</dbReference>
<dbReference type="Gene3D" id="1.20.20.10">
    <property type="entry name" value="F1F0 ATP synthase subunit C"/>
    <property type="match status" value="1"/>
</dbReference>
<dbReference type="HAMAP" id="MF_01396">
    <property type="entry name" value="ATP_synth_c_bact"/>
    <property type="match status" value="1"/>
</dbReference>
<dbReference type="InterPro" id="IPR005953">
    <property type="entry name" value="ATP_synth_csu_bac/chlpt"/>
</dbReference>
<dbReference type="InterPro" id="IPR000454">
    <property type="entry name" value="ATP_synth_F0_csu"/>
</dbReference>
<dbReference type="InterPro" id="IPR020537">
    <property type="entry name" value="ATP_synth_F0_csu_DDCD_BS"/>
</dbReference>
<dbReference type="InterPro" id="IPR038662">
    <property type="entry name" value="ATP_synth_F0_csu_sf"/>
</dbReference>
<dbReference type="InterPro" id="IPR002379">
    <property type="entry name" value="ATPase_proteolipid_c-like_dom"/>
</dbReference>
<dbReference type="InterPro" id="IPR035921">
    <property type="entry name" value="F/V-ATP_Csub_sf"/>
</dbReference>
<dbReference type="NCBIfam" id="TIGR01260">
    <property type="entry name" value="ATP_synt_c"/>
    <property type="match status" value="1"/>
</dbReference>
<dbReference type="NCBIfam" id="NF005608">
    <property type="entry name" value="PRK07354.1"/>
    <property type="match status" value="1"/>
</dbReference>
<dbReference type="PANTHER" id="PTHR10031">
    <property type="entry name" value="ATP SYNTHASE LIPID-BINDING PROTEIN, MITOCHONDRIAL"/>
    <property type="match status" value="1"/>
</dbReference>
<dbReference type="PANTHER" id="PTHR10031:SF0">
    <property type="entry name" value="ATPASE PROTEIN 9"/>
    <property type="match status" value="1"/>
</dbReference>
<dbReference type="Pfam" id="PF00137">
    <property type="entry name" value="ATP-synt_C"/>
    <property type="match status" value="1"/>
</dbReference>
<dbReference type="PRINTS" id="PR00124">
    <property type="entry name" value="ATPASEC"/>
</dbReference>
<dbReference type="SUPFAM" id="SSF81333">
    <property type="entry name" value="F1F0 ATP synthase subunit C"/>
    <property type="match status" value="1"/>
</dbReference>
<dbReference type="PROSITE" id="PS00605">
    <property type="entry name" value="ATPASE_C"/>
    <property type="match status" value="1"/>
</dbReference>
<proteinExistence type="inferred from homology"/>
<reference key="1">
    <citation type="submission" date="2003-11" db="EMBL/GenBank/DDBJ databases">
        <title>Whole genome sequence of Porphyra yezoensis chloroplast.</title>
        <authorList>
            <person name="Kunimoto M."/>
            <person name="Morishima K."/>
            <person name="Yoshikawa M."/>
            <person name="Fukuda S."/>
            <person name="Kobayashi T."/>
            <person name="Kobayashi M."/>
            <person name="Okazaki T."/>
            <person name="Ohara I."/>
            <person name="Nakayama I."/>
        </authorList>
    </citation>
    <scope>NUCLEOTIDE SEQUENCE [LARGE SCALE GENOMIC DNA]</scope>
    <source>
        <strain>U-51</strain>
    </source>
</reference>
<name>ATPH_PYRYE</name>
<evidence type="ECO:0000255" key="1">
    <source>
        <dbReference type="HAMAP-Rule" id="MF_01396"/>
    </source>
</evidence>
<protein>
    <recommendedName>
        <fullName evidence="1">ATP synthase subunit c, chloroplastic</fullName>
    </recommendedName>
    <alternativeName>
        <fullName evidence="1">ATP synthase F(0) sector subunit c</fullName>
    </alternativeName>
    <alternativeName>
        <fullName evidence="1">ATPase subunit III</fullName>
    </alternativeName>
    <alternativeName>
        <fullName evidence="1">F-type ATPase subunit c</fullName>
        <shortName evidence="1">F-ATPase subunit c</shortName>
    </alternativeName>
    <alternativeName>
        <fullName evidence="1">Lipid-binding protein</fullName>
    </alternativeName>
</protein>